<name>LON_CITBB</name>
<proteinExistence type="inferred from homology"/>
<dbReference type="EC" id="3.4.21.53" evidence="1"/>
<dbReference type="EMBL" id="CP001124">
    <property type="protein sequence ID" value="ACH37716.1"/>
    <property type="molecule type" value="Genomic_DNA"/>
</dbReference>
<dbReference type="RefSeq" id="WP_012529123.1">
    <property type="nucleotide sequence ID" value="NC_011146.1"/>
</dbReference>
<dbReference type="SMR" id="B5EDX8"/>
<dbReference type="STRING" id="404380.Gbem_0689"/>
<dbReference type="MEROPS" id="S16.001"/>
<dbReference type="KEGG" id="gbm:Gbem_0689"/>
<dbReference type="eggNOG" id="COG0466">
    <property type="taxonomic scope" value="Bacteria"/>
</dbReference>
<dbReference type="HOGENOM" id="CLU_004109_4_3_7"/>
<dbReference type="OrthoDB" id="9803599at2"/>
<dbReference type="Proteomes" id="UP000008825">
    <property type="component" value="Chromosome"/>
</dbReference>
<dbReference type="GO" id="GO:0005737">
    <property type="term" value="C:cytoplasm"/>
    <property type="evidence" value="ECO:0007669"/>
    <property type="project" value="UniProtKB-SubCell"/>
</dbReference>
<dbReference type="GO" id="GO:0005524">
    <property type="term" value="F:ATP binding"/>
    <property type="evidence" value="ECO:0007669"/>
    <property type="project" value="UniProtKB-UniRule"/>
</dbReference>
<dbReference type="GO" id="GO:0016887">
    <property type="term" value="F:ATP hydrolysis activity"/>
    <property type="evidence" value="ECO:0007669"/>
    <property type="project" value="UniProtKB-UniRule"/>
</dbReference>
<dbReference type="GO" id="GO:0004176">
    <property type="term" value="F:ATP-dependent peptidase activity"/>
    <property type="evidence" value="ECO:0007669"/>
    <property type="project" value="UniProtKB-UniRule"/>
</dbReference>
<dbReference type="GO" id="GO:0043565">
    <property type="term" value="F:sequence-specific DNA binding"/>
    <property type="evidence" value="ECO:0007669"/>
    <property type="project" value="UniProtKB-UniRule"/>
</dbReference>
<dbReference type="GO" id="GO:0004252">
    <property type="term" value="F:serine-type endopeptidase activity"/>
    <property type="evidence" value="ECO:0007669"/>
    <property type="project" value="UniProtKB-UniRule"/>
</dbReference>
<dbReference type="GO" id="GO:0034605">
    <property type="term" value="P:cellular response to heat"/>
    <property type="evidence" value="ECO:0007669"/>
    <property type="project" value="UniProtKB-UniRule"/>
</dbReference>
<dbReference type="GO" id="GO:0006515">
    <property type="term" value="P:protein quality control for misfolded or incompletely synthesized proteins"/>
    <property type="evidence" value="ECO:0007669"/>
    <property type="project" value="UniProtKB-UniRule"/>
</dbReference>
<dbReference type="CDD" id="cd19500">
    <property type="entry name" value="RecA-like_Lon"/>
    <property type="match status" value="1"/>
</dbReference>
<dbReference type="FunFam" id="1.20.5.5270:FF:000002">
    <property type="entry name" value="Lon protease homolog"/>
    <property type="match status" value="1"/>
</dbReference>
<dbReference type="FunFam" id="3.40.50.300:FF:000382">
    <property type="entry name" value="Lon protease homolog 2, peroxisomal"/>
    <property type="match status" value="1"/>
</dbReference>
<dbReference type="Gene3D" id="1.10.8.60">
    <property type="match status" value="1"/>
</dbReference>
<dbReference type="Gene3D" id="1.20.5.5270">
    <property type="match status" value="1"/>
</dbReference>
<dbReference type="Gene3D" id="1.20.58.1480">
    <property type="match status" value="1"/>
</dbReference>
<dbReference type="Gene3D" id="3.30.230.10">
    <property type="match status" value="1"/>
</dbReference>
<dbReference type="Gene3D" id="2.30.130.40">
    <property type="entry name" value="LON domain-like"/>
    <property type="match status" value="1"/>
</dbReference>
<dbReference type="Gene3D" id="3.40.50.300">
    <property type="entry name" value="P-loop containing nucleotide triphosphate hydrolases"/>
    <property type="match status" value="1"/>
</dbReference>
<dbReference type="HAMAP" id="MF_01973">
    <property type="entry name" value="lon_bact"/>
    <property type="match status" value="1"/>
</dbReference>
<dbReference type="InterPro" id="IPR003593">
    <property type="entry name" value="AAA+_ATPase"/>
</dbReference>
<dbReference type="InterPro" id="IPR003959">
    <property type="entry name" value="ATPase_AAA_core"/>
</dbReference>
<dbReference type="InterPro" id="IPR027543">
    <property type="entry name" value="Lon_bac"/>
</dbReference>
<dbReference type="InterPro" id="IPR004815">
    <property type="entry name" value="Lon_bac/euk-typ"/>
</dbReference>
<dbReference type="InterPro" id="IPR054594">
    <property type="entry name" value="Lon_lid"/>
</dbReference>
<dbReference type="InterPro" id="IPR008269">
    <property type="entry name" value="Lon_proteolytic"/>
</dbReference>
<dbReference type="InterPro" id="IPR027065">
    <property type="entry name" value="Lon_Prtase"/>
</dbReference>
<dbReference type="InterPro" id="IPR003111">
    <property type="entry name" value="Lon_prtase_N"/>
</dbReference>
<dbReference type="InterPro" id="IPR046336">
    <property type="entry name" value="Lon_prtase_N_sf"/>
</dbReference>
<dbReference type="InterPro" id="IPR027417">
    <property type="entry name" value="P-loop_NTPase"/>
</dbReference>
<dbReference type="InterPro" id="IPR008268">
    <property type="entry name" value="Peptidase_S16_AS"/>
</dbReference>
<dbReference type="InterPro" id="IPR015947">
    <property type="entry name" value="PUA-like_sf"/>
</dbReference>
<dbReference type="InterPro" id="IPR020568">
    <property type="entry name" value="Ribosomal_Su5_D2-typ_SF"/>
</dbReference>
<dbReference type="InterPro" id="IPR014721">
    <property type="entry name" value="Ribsml_uS5_D2-typ_fold_subgr"/>
</dbReference>
<dbReference type="NCBIfam" id="TIGR00763">
    <property type="entry name" value="lon"/>
    <property type="match status" value="1"/>
</dbReference>
<dbReference type="PANTHER" id="PTHR10046">
    <property type="entry name" value="ATP DEPENDENT LON PROTEASE FAMILY MEMBER"/>
    <property type="match status" value="1"/>
</dbReference>
<dbReference type="Pfam" id="PF00004">
    <property type="entry name" value="AAA"/>
    <property type="match status" value="1"/>
</dbReference>
<dbReference type="Pfam" id="PF05362">
    <property type="entry name" value="Lon_C"/>
    <property type="match status" value="1"/>
</dbReference>
<dbReference type="Pfam" id="PF22667">
    <property type="entry name" value="Lon_lid"/>
    <property type="match status" value="1"/>
</dbReference>
<dbReference type="Pfam" id="PF02190">
    <property type="entry name" value="LON_substr_bdg"/>
    <property type="match status" value="1"/>
</dbReference>
<dbReference type="PIRSF" id="PIRSF001174">
    <property type="entry name" value="Lon_proteas"/>
    <property type="match status" value="1"/>
</dbReference>
<dbReference type="PRINTS" id="PR00830">
    <property type="entry name" value="ENDOLAPTASE"/>
</dbReference>
<dbReference type="SMART" id="SM00382">
    <property type="entry name" value="AAA"/>
    <property type="match status" value="1"/>
</dbReference>
<dbReference type="SMART" id="SM00464">
    <property type="entry name" value="LON"/>
    <property type="match status" value="1"/>
</dbReference>
<dbReference type="SUPFAM" id="SSF52540">
    <property type="entry name" value="P-loop containing nucleoside triphosphate hydrolases"/>
    <property type="match status" value="1"/>
</dbReference>
<dbReference type="SUPFAM" id="SSF88697">
    <property type="entry name" value="PUA domain-like"/>
    <property type="match status" value="1"/>
</dbReference>
<dbReference type="SUPFAM" id="SSF54211">
    <property type="entry name" value="Ribosomal protein S5 domain 2-like"/>
    <property type="match status" value="1"/>
</dbReference>
<dbReference type="PROSITE" id="PS51787">
    <property type="entry name" value="LON_N"/>
    <property type="match status" value="1"/>
</dbReference>
<dbReference type="PROSITE" id="PS51786">
    <property type="entry name" value="LON_PROTEOLYTIC"/>
    <property type="match status" value="1"/>
</dbReference>
<dbReference type="PROSITE" id="PS01046">
    <property type="entry name" value="LON_SER"/>
    <property type="match status" value="1"/>
</dbReference>
<reference key="1">
    <citation type="submission" date="2008-07" db="EMBL/GenBank/DDBJ databases">
        <title>Complete sequence of Geobacter bemidjiensis BEM.</title>
        <authorList>
            <consortium name="US DOE Joint Genome Institute"/>
            <person name="Lucas S."/>
            <person name="Copeland A."/>
            <person name="Lapidus A."/>
            <person name="Glavina del Rio T."/>
            <person name="Dalin E."/>
            <person name="Tice H."/>
            <person name="Bruce D."/>
            <person name="Goodwin L."/>
            <person name="Pitluck S."/>
            <person name="Kiss H."/>
            <person name="Brettin T."/>
            <person name="Detter J.C."/>
            <person name="Han C."/>
            <person name="Kuske C.R."/>
            <person name="Schmutz J."/>
            <person name="Larimer F."/>
            <person name="Land M."/>
            <person name="Hauser L."/>
            <person name="Kyrpides N."/>
            <person name="Lykidis A."/>
            <person name="Lovley D."/>
            <person name="Richardson P."/>
        </authorList>
    </citation>
    <scope>NUCLEOTIDE SEQUENCE [LARGE SCALE GENOMIC DNA]</scope>
    <source>
        <strain>ATCC BAA-1014 / DSM 16622 / JCM 12645 / Bem</strain>
    </source>
</reference>
<keyword id="KW-0067">ATP-binding</keyword>
<keyword id="KW-0963">Cytoplasm</keyword>
<keyword id="KW-0378">Hydrolase</keyword>
<keyword id="KW-0547">Nucleotide-binding</keyword>
<keyword id="KW-0645">Protease</keyword>
<keyword id="KW-1185">Reference proteome</keyword>
<keyword id="KW-0720">Serine protease</keyword>
<keyword id="KW-0346">Stress response</keyword>
<protein>
    <recommendedName>
        <fullName evidence="1">Lon protease</fullName>
        <ecNumber evidence="1">3.4.21.53</ecNumber>
    </recommendedName>
    <alternativeName>
        <fullName evidence="1">ATP-dependent protease La</fullName>
    </alternativeName>
</protein>
<evidence type="ECO:0000255" key="1">
    <source>
        <dbReference type="HAMAP-Rule" id="MF_01973"/>
    </source>
</evidence>
<evidence type="ECO:0000255" key="2">
    <source>
        <dbReference type="PROSITE-ProRule" id="PRU01122"/>
    </source>
</evidence>
<evidence type="ECO:0000255" key="3">
    <source>
        <dbReference type="PROSITE-ProRule" id="PRU01123"/>
    </source>
</evidence>
<evidence type="ECO:0000256" key="4">
    <source>
        <dbReference type="SAM" id="MobiDB-lite"/>
    </source>
</evidence>
<accession>B5EDX8</accession>
<comment type="function">
    <text evidence="1">ATP-dependent serine protease that mediates the selective degradation of mutant and abnormal proteins as well as certain short-lived regulatory proteins. Required for cellular homeostasis and for survival from DNA damage and developmental changes induced by stress. Degrades polypeptides processively to yield small peptide fragments that are 5 to 10 amino acids long. Binds to DNA in a double-stranded, site-specific manner.</text>
</comment>
<comment type="catalytic activity">
    <reaction evidence="1">
        <text>Hydrolysis of proteins in presence of ATP.</text>
        <dbReference type="EC" id="3.4.21.53"/>
    </reaction>
</comment>
<comment type="subunit">
    <text evidence="1">Homohexamer. Organized in a ring with a central cavity.</text>
</comment>
<comment type="subcellular location">
    <subcellularLocation>
        <location evidence="1">Cytoplasm</location>
    </subcellularLocation>
</comment>
<comment type="induction">
    <text evidence="1">By heat shock.</text>
</comment>
<comment type="similarity">
    <text evidence="1">Belongs to the peptidase S16 family.</text>
</comment>
<feature type="chain" id="PRO_0000396569" description="Lon protease">
    <location>
        <begin position="1"/>
        <end position="794"/>
    </location>
</feature>
<feature type="domain" description="Lon N-terminal" evidence="3">
    <location>
        <begin position="13"/>
        <end position="204"/>
    </location>
</feature>
<feature type="domain" description="Lon proteolytic" evidence="2">
    <location>
        <begin position="592"/>
        <end position="773"/>
    </location>
</feature>
<feature type="region of interest" description="Disordered" evidence="4">
    <location>
        <begin position="774"/>
        <end position="794"/>
    </location>
</feature>
<feature type="compositionally biased region" description="Low complexity" evidence="4">
    <location>
        <begin position="774"/>
        <end position="788"/>
    </location>
</feature>
<feature type="active site" evidence="1">
    <location>
        <position position="679"/>
    </location>
</feature>
<feature type="active site" evidence="1">
    <location>
        <position position="722"/>
    </location>
</feature>
<feature type="binding site" evidence="1">
    <location>
        <begin position="356"/>
        <end position="363"/>
    </location>
    <ligand>
        <name>ATP</name>
        <dbReference type="ChEBI" id="CHEBI:30616"/>
    </ligand>
</feature>
<organism>
    <name type="scientific">Citrifermentans bemidjiense (strain ATCC BAA-1014 / DSM 16622 / JCM 12645 / Bem)</name>
    <name type="common">Geobacter bemidjiensis</name>
    <dbReference type="NCBI Taxonomy" id="404380"/>
    <lineage>
        <taxon>Bacteria</taxon>
        <taxon>Pseudomonadati</taxon>
        <taxon>Thermodesulfobacteriota</taxon>
        <taxon>Desulfuromonadia</taxon>
        <taxon>Geobacterales</taxon>
        <taxon>Geobacteraceae</taxon>
        <taxon>Citrifermentans</taxon>
    </lineage>
</organism>
<gene>
    <name evidence="1" type="primary">lon</name>
    <name type="ordered locus">Gbem_0689</name>
</gene>
<sequence>MTENITINMPEIVPLYPLREIIAFPYMVFTIFLKQEDMPPFEEAVLFNNLVALVKLREEPTGELFPALHEIGTLCKVMQINKLAGGGAKVVLEGVIRVRLLAIVQQTPVALSRLEPVREFAEKSMVSEALVGSLNALLKIALSYGRPLPDDVMKMIDFIDNPARLSDLVALYLNLPIDELQKLLETVDPLERLKKVYMHLTNEVQRLQIKGEVQAEVTKKVGKSQKEFLLREQMKQIQEELGEEDSRLGEANELRSKVESAHMPEDVRRIAEKEMRRLERINPASPEYTVSRTYLDYLTTIPWQVSTPDNRDINQAETILNEDHYDLKKVKERILEYLAVRSLKDKMKGPILCFVGPPGVGKTSLGKSIARTLGRKFIRISLGGMRDEAEIRGHRRTYIGALPGRIIQEINRAGSNNPVFMLDEVDKIGADFRGDPASALLEVLDPEQNFSFTDHYLDVPFDLTNVMFITTANQLDPIPAPLKDRMEVITLSGYTDEEKLNIAKSYLVAREVEENGLASMAPQFTDEAIYRVTHDYTREAGVRNLQRNIASICRKIAKEVAQGKKARPIVNPETVSELLGAPKFFDEVASEKDRVGVATGLAWTESGGDIIFVEATKMKGKEDLILTGSLGEVMKESVRAALSFVKANCAELGIDKKMFDETTLHIHVPAGSIPKDGPSAGITMATAIVSLFSGRAARRDVAMTGEMSLTGRVLAIGGLKEKVLAARRAGVKKVLAPAKNKKDLEDIPENVKNELEFFFVEDIREVFVQALNPTSPAPTAATSARTPAGAPPPQ</sequence>